<dbReference type="EC" id="2.4.1.182" evidence="1"/>
<dbReference type="EMBL" id="CP000802">
    <property type="protein sequence ID" value="ABV04582.1"/>
    <property type="molecule type" value="Genomic_DNA"/>
</dbReference>
<dbReference type="RefSeq" id="WP_000139654.1">
    <property type="nucleotide sequence ID" value="NC_009800.1"/>
</dbReference>
<dbReference type="SMR" id="A7ZWC8"/>
<dbReference type="CAZy" id="GT19">
    <property type="family name" value="Glycosyltransferase Family 19"/>
</dbReference>
<dbReference type="GeneID" id="93777243"/>
<dbReference type="KEGG" id="ecx:EcHS_A0184"/>
<dbReference type="HOGENOM" id="CLU_036577_3_0_6"/>
<dbReference type="UniPathway" id="UPA00359">
    <property type="reaction ID" value="UER00481"/>
</dbReference>
<dbReference type="GO" id="GO:0016020">
    <property type="term" value="C:membrane"/>
    <property type="evidence" value="ECO:0007669"/>
    <property type="project" value="GOC"/>
</dbReference>
<dbReference type="GO" id="GO:0008915">
    <property type="term" value="F:lipid-A-disaccharide synthase activity"/>
    <property type="evidence" value="ECO:0007669"/>
    <property type="project" value="UniProtKB-UniRule"/>
</dbReference>
<dbReference type="GO" id="GO:0005543">
    <property type="term" value="F:phospholipid binding"/>
    <property type="evidence" value="ECO:0007669"/>
    <property type="project" value="TreeGrafter"/>
</dbReference>
<dbReference type="GO" id="GO:0009245">
    <property type="term" value="P:lipid A biosynthetic process"/>
    <property type="evidence" value="ECO:0007669"/>
    <property type="project" value="UniProtKB-UniRule"/>
</dbReference>
<dbReference type="CDD" id="cd01635">
    <property type="entry name" value="Glycosyltransferase_GTB-type"/>
    <property type="match status" value="1"/>
</dbReference>
<dbReference type="HAMAP" id="MF_00392">
    <property type="entry name" value="LpxB"/>
    <property type="match status" value="1"/>
</dbReference>
<dbReference type="InterPro" id="IPR003835">
    <property type="entry name" value="Glyco_trans_19"/>
</dbReference>
<dbReference type="NCBIfam" id="TIGR00215">
    <property type="entry name" value="lpxB"/>
    <property type="match status" value="1"/>
</dbReference>
<dbReference type="PANTHER" id="PTHR30372">
    <property type="entry name" value="LIPID-A-DISACCHARIDE SYNTHASE"/>
    <property type="match status" value="1"/>
</dbReference>
<dbReference type="PANTHER" id="PTHR30372:SF4">
    <property type="entry name" value="LIPID-A-DISACCHARIDE SYNTHASE, MITOCHONDRIAL-RELATED"/>
    <property type="match status" value="1"/>
</dbReference>
<dbReference type="Pfam" id="PF02684">
    <property type="entry name" value="LpxB"/>
    <property type="match status" value="1"/>
</dbReference>
<dbReference type="SUPFAM" id="SSF53756">
    <property type="entry name" value="UDP-Glycosyltransferase/glycogen phosphorylase"/>
    <property type="match status" value="1"/>
</dbReference>
<reference key="1">
    <citation type="journal article" date="2008" name="J. Bacteriol.">
        <title>The pangenome structure of Escherichia coli: comparative genomic analysis of E. coli commensal and pathogenic isolates.</title>
        <authorList>
            <person name="Rasko D.A."/>
            <person name="Rosovitz M.J."/>
            <person name="Myers G.S.A."/>
            <person name="Mongodin E.F."/>
            <person name="Fricke W.F."/>
            <person name="Gajer P."/>
            <person name="Crabtree J."/>
            <person name="Sebaihia M."/>
            <person name="Thomson N.R."/>
            <person name="Chaudhuri R."/>
            <person name="Henderson I.R."/>
            <person name="Sperandio V."/>
            <person name="Ravel J."/>
        </authorList>
    </citation>
    <scope>NUCLEOTIDE SEQUENCE [LARGE SCALE GENOMIC DNA]</scope>
    <source>
        <strain>HS</strain>
    </source>
</reference>
<organism>
    <name type="scientific">Escherichia coli O9:H4 (strain HS)</name>
    <dbReference type="NCBI Taxonomy" id="331112"/>
    <lineage>
        <taxon>Bacteria</taxon>
        <taxon>Pseudomonadati</taxon>
        <taxon>Pseudomonadota</taxon>
        <taxon>Gammaproteobacteria</taxon>
        <taxon>Enterobacterales</taxon>
        <taxon>Enterobacteriaceae</taxon>
        <taxon>Escherichia</taxon>
    </lineage>
</organism>
<comment type="function">
    <text evidence="1">Condensation of UDP-2,3-diacylglucosamine and 2,3-diacylglucosamine-1-phosphate to form lipid A disaccharide, a precursor of lipid A, a phosphorylated glycolipid that anchors the lipopolysaccharide to the outer membrane of the cell.</text>
</comment>
<comment type="catalytic activity">
    <reaction evidence="1">
        <text>2-N,3-O-bis[(3R)-3-hydroxytetradecanoyl]-alpha-D-glucosaminyl 1-phosphate + UDP-2-N,3-O-bis[(3R)-3-hydroxytetradecanoyl]-alpha-D-glucosamine = lipid A disaccharide (E. coli) + UDP + H(+)</text>
        <dbReference type="Rhea" id="RHEA:22668"/>
        <dbReference type="ChEBI" id="CHEBI:15378"/>
        <dbReference type="ChEBI" id="CHEBI:57957"/>
        <dbReference type="ChEBI" id="CHEBI:58223"/>
        <dbReference type="ChEBI" id="CHEBI:58466"/>
        <dbReference type="ChEBI" id="CHEBI:78847"/>
    </reaction>
</comment>
<comment type="catalytic activity">
    <reaction evidence="1">
        <text>a lipid X + a UDP-2-N,3-O-bis[(3R)-3-hydroxyacyl]-alpha-D-glucosamine = a lipid A disaccharide + UDP + H(+)</text>
        <dbReference type="Rhea" id="RHEA:67828"/>
        <dbReference type="ChEBI" id="CHEBI:15378"/>
        <dbReference type="ChEBI" id="CHEBI:58223"/>
        <dbReference type="ChEBI" id="CHEBI:137748"/>
        <dbReference type="ChEBI" id="CHEBI:176338"/>
        <dbReference type="ChEBI" id="CHEBI:176343"/>
        <dbReference type="EC" id="2.4.1.182"/>
    </reaction>
</comment>
<comment type="pathway">
    <text evidence="1">Glycolipid biosynthesis; lipid IV(A) biosynthesis; lipid IV(A) from (3R)-3-hydroxytetradecanoyl-[acyl-carrier-protein] and UDP-N-acetyl-alpha-D-glucosamine: step 5/6.</text>
</comment>
<comment type="similarity">
    <text evidence="1">Belongs to the LpxB family.</text>
</comment>
<feature type="chain" id="PRO_1000060770" description="Lipid-A-disaccharide synthase">
    <location>
        <begin position="1"/>
        <end position="382"/>
    </location>
</feature>
<accession>A7ZWC8</accession>
<sequence length="382" mass="42382">MTEQRPLTIALVAGETSGDILGAGLIRALKEHVPNARFVGVAGPRMQAEGCEAWYEMEELAVMGIVEVLGRLRRLLHIRADLTKRFGELKPDVFVGIDAPDFNITLEGNLKKQGIKTIHYVSPSVWAWRQKRVFKIGRATDLVLAFLPFEKAFYDKYNVPCRFIGHTMADAMPLDPDKNAARDVLGIPHDAHCLALLPGSRGAEVEMLSADFLKTAQLLRQTYPDLEIVVPLVNAKRREQFERIKAEVAPDLSVHLLDGMGREAMVASDAALLASGTAALECMLAKCPMVVGYRMKPFTFWLAKRLVKTDYVSLPNLLAGRELVKELLQEECEPQKLAAALLPLLANGKTSHAMHDTFRELHQQIRCNADEQAAQAVLELAQ</sequence>
<keyword id="KW-0328">Glycosyltransferase</keyword>
<keyword id="KW-0441">Lipid A biosynthesis</keyword>
<keyword id="KW-0444">Lipid biosynthesis</keyword>
<keyword id="KW-0443">Lipid metabolism</keyword>
<keyword id="KW-0808">Transferase</keyword>
<gene>
    <name evidence="1" type="primary">lpxB</name>
    <name type="ordered locus">EcHS_A0184</name>
</gene>
<proteinExistence type="inferred from homology"/>
<protein>
    <recommendedName>
        <fullName evidence="1">Lipid-A-disaccharide synthase</fullName>
        <ecNumber evidence="1">2.4.1.182</ecNumber>
    </recommendedName>
</protein>
<evidence type="ECO:0000255" key="1">
    <source>
        <dbReference type="HAMAP-Rule" id="MF_00392"/>
    </source>
</evidence>
<name>LPXB_ECOHS</name>